<comment type="function">
    <text evidence="1">Responsible for the release of ribosomes from messenger RNA at the termination of protein biosynthesis. May increase the efficiency of translation by recycling ribosomes from one round of translation to another.</text>
</comment>
<comment type="subcellular location">
    <subcellularLocation>
        <location evidence="1">Cytoplasm</location>
    </subcellularLocation>
</comment>
<comment type="similarity">
    <text evidence="1">Belongs to the RRF family.</text>
</comment>
<accession>B8FGE3</accession>
<keyword id="KW-0963">Cytoplasm</keyword>
<keyword id="KW-0648">Protein biosynthesis</keyword>
<keyword id="KW-1185">Reference proteome</keyword>
<name>RRF_DESAL</name>
<reference key="1">
    <citation type="journal article" date="2012" name="Environ. Microbiol.">
        <title>The genome sequence of Desulfatibacillum alkenivorans AK-01: a blueprint for anaerobic alkane oxidation.</title>
        <authorList>
            <person name="Callaghan A.V."/>
            <person name="Morris B.E."/>
            <person name="Pereira I.A."/>
            <person name="McInerney M.J."/>
            <person name="Austin R.N."/>
            <person name="Groves J.T."/>
            <person name="Kukor J.J."/>
            <person name="Suflita J.M."/>
            <person name="Young L.Y."/>
            <person name="Zylstra G.J."/>
            <person name="Wawrik B."/>
        </authorList>
    </citation>
    <scope>NUCLEOTIDE SEQUENCE [LARGE SCALE GENOMIC DNA]</scope>
    <source>
        <strain>AK-01</strain>
    </source>
</reference>
<dbReference type="EMBL" id="CP001322">
    <property type="protein sequence ID" value="ACL04852.1"/>
    <property type="molecule type" value="Genomic_DNA"/>
</dbReference>
<dbReference type="RefSeq" id="WP_015947912.1">
    <property type="nucleotide sequence ID" value="NC_011768.1"/>
</dbReference>
<dbReference type="SMR" id="B8FGE3"/>
<dbReference type="KEGG" id="dal:Dalk_3162"/>
<dbReference type="eggNOG" id="COG0233">
    <property type="taxonomic scope" value="Bacteria"/>
</dbReference>
<dbReference type="HOGENOM" id="CLU_073981_2_0_7"/>
<dbReference type="Proteomes" id="UP000000739">
    <property type="component" value="Chromosome"/>
</dbReference>
<dbReference type="GO" id="GO:0005737">
    <property type="term" value="C:cytoplasm"/>
    <property type="evidence" value="ECO:0007669"/>
    <property type="project" value="UniProtKB-SubCell"/>
</dbReference>
<dbReference type="GO" id="GO:0043023">
    <property type="term" value="F:ribosomal large subunit binding"/>
    <property type="evidence" value="ECO:0007669"/>
    <property type="project" value="TreeGrafter"/>
</dbReference>
<dbReference type="GO" id="GO:0006415">
    <property type="term" value="P:translational termination"/>
    <property type="evidence" value="ECO:0007669"/>
    <property type="project" value="UniProtKB-UniRule"/>
</dbReference>
<dbReference type="CDD" id="cd00520">
    <property type="entry name" value="RRF"/>
    <property type="match status" value="1"/>
</dbReference>
<dbReference type="FunFam" id="1.10.132.20:FF:000001">
    <property type="entry name" value="Ribosome-recycling factor"/>
    <property type="match status" value="1"/>
</dbReference>
<dbReference type="FunFam" id="3.30.1360.40:FF:000001">
    <property type="entry name" value="Ribosome-recycling factor"/>
    <property type="match status" value="1"/>
</dbReference>
<dbReference type="Gene3D" id="3.30.1360.40">
    <property type="match status" value="1"/>
</dbReference>
<dbReference type="Gene3D" id="1.10.132.20">
    <property type="entry name" value="Ribosome-recycling factor"/>
    <property type="match status" value="1"/>
</dbReference>
<dbReference type="HAMAP" id="MF_00040">
    <property type="entry name" value="RRF"/>
    <property type="match status" value="1"/>
</dbReference>
<dbReference type="InterPro" id="IPR002661">
    <property type="entry name" value="Ribosome_recyc_fac"/>
</dbReference>
<dbReference type="InterPro" id="IPR023584">
    <property type="entry name" value="Ribosome_recyc_fac_dom"/>
</dbReference>
<dbReference type="InterPro" id="IPR036191">
    <property type="entry name" value="RRF_sf"/>
</dbReference>
<dbReference type="NCBIfam" id="TIGR00496">
    <property type="entry name" value="frr"/>
    <property type="match status" value="1"/>
</dbReference>
<dbReference type="PANTHER" id="PTHR20982:SF3">
    <property type="entry name" value="MITOCHONDRIAL RIBOSOME RECYCLING FACTOR PSEUDO 1"/>
    <property type="match status" value="1"/>
</dbReference>
<dbReference type="PANTHER" id="PTHR20982">
    <property type="entry name" value="RIBOSOME RECYCLING FACTOR"/>
    <property type="match status" value="1"/>
</dbReference>
<dbReference type="Pfam" id="PF01765">
    <property type="entry name" value="RRF"/>
    <property type="match status" value="1"/>
</dbReference>
<dbReference type="SUPFAM" id="SSF55194">
    <property type="entry name" value="Ribosome recycling factor, RRF"/>
    <property type="match status" value="1"/>
</dbReference>
<proteinExistence type="inferred from homology"/>
<organism>
    <name type="scientific">Desulfatibacillum aliphaticivorans</name>
    <dbReference type="NCBI Taxonomy" id="218208"/>
    <lineage>
        <taxon>Bacteria</taxon>
        <taxon>Pseudomonadati</taxon>
        <taxon>Thermodesulfobacteriota</taxon>
        <taxon>Desulfobacteria</taxon>
        <taxon>Desulfobacterales</taxon>
        <taxon>Desulfatibacillaceae</taxon>
        <taxon>Desulfatibacillum</taxon>
    </lineage>
</organism>
<protein>
    <recommendedName>
        <fullName evidence="1">Ribosome-recycling factor</fullName>
        <shortName evidence="1">RRF</shortName>
    </recommendedName>
    <alternativeName>
        <fullName evidence="1">Ribosome-releasing factor</fullName>
    </alternativeName>
</protein>
<evidence type="ECO:0000255" key="1">
    <source>
        <dbReference type="HAMAP-Rule" id="MF_00040"/>
    </source>
</evidence>
<feature type="chain" id="PRO_1000194919" description="Ribosome-recycling factor">
    <location>
        <begin position="1"/>
        <end position="185"/>
    </location>
</feature>
<sequence length="185" mass="20815">MLELVYEEAREKMDKAIAALEKGLLRVRTGRASLSMLDGVKLDYYGTPTPINQAATVAIPESRLITIQPWDASVIKDIEKAILKSDLGLNPSNDGKIIRIAIPPLTEDRRKEMVKLVNKMSEEGKISVRNIRRDANETIKSMKKDGDIAEDLAFKGQDEVQKITDDFVKKVDDICAQKEKEILEF</sequence>
<gene>
    <name evidence="1" type="primary">frr</name>
    <name type="ordered locus">Dalk_3162</name>
</gene>